<protein>
    <recommendedName>
        <fullName>Lysozyme C</fullName>
        <ecNumber>3.2.1.17</ecNumber>
    </recommendedName>
    <alternativeName>
        <fullName>1,4-beta-N-acetylmuramidase C</fullName>
    </alternativeName>
</protein>
<dbReference type="EC" id="3.2.1.17"/>
<dbReference type="PIR" id="A00859">
    <property type="entry name" value="LZUH"/>
</dbReference>
<dbReference type="PDB" id="1FBI">
    <property type="method" value="X-ray"/>
    <property type="resolution" value="3.00 A"/>
    <property type="chains" value="X/Y=1-129"/>
</dbReference>
<dbReference type="PDB" id="1HHL">
    <property type="method" value="X-ray"/>
    <property type="resolution" value="1.90 A"/>
    <property type="chains" value="A=1-129"/>
</dbReference>
<dbReference type="PDBsum" id="1FBI"/>
<dbReference type="PDBsum" id="1HHL"/>
<dbReference type="SMR" id="P00704"/>
<dbReference type="STRING" id="8996.ENSNMEP00000000270"/>
<dbReference type="CAZy" id="GH22">
    <property type="family name" value="Glycoside Hydrolase Family 22"/>
</dbReference>
<dbReference type="ABCD" id="P00704">
    <property type="antibodies" value="2 sequenced antibodies"/>
</dbReference>
<dbReference type="EvolutionaryTrace" id="P00704"/>
<dbReference type="GO" id="GO:0005576">
    <property type="term" value="C:extracellular region"/>
    <property type="evidence" value="ECO:0007669"/>
    <property type="project" value="UniProtKB-SubCell"/>
</dbReference>
<dbReference type="GO" id="GO:0003796">
    <property type="term" value="F:lysozyme activity"/>
    <property type="evidence" value="ECO:0007669"/>
    <property type="project" value="UniProtKB-EC"/>
</dbReference>
<dbReference type="GO" id="GO:0050829">
    <property type="term" value="P:defense response to Gram-negative bacterium"/>
    <property type="evidence" value="ECO:0007669"/>
    <property type="project" value="TreeGrafter"/>
</dbReference>
<dbReference type="GO" id="GO:0050830">
    <property type="term" value="P:defense response to Gram-positive bacterium"/>
    <property type="evidence" value="ECO:0007669"/>
    <property type="project" value="TreeGrafter"/>
</dbReference>
<dbReference type="GO" id="GO:0031640">
    <property type="term" value="P:killing of cells of another organism"/>
    <property type="evidence" value="ECO:0007669"/>
    <property type="project" value="UniProtKB-KW"/>
</dbReference>
<dbReference type="CDD" id="cd16897">
    <property type="entry name" value="LYZ_C"/>
    <property type="match status" value="1"/>
</dbReference>
<dbReference type="FunFam" id="1.10.530.10:FF:000001">
    <property type="entry name" value="Lysozyme C"/>
    <property type="match status" value="1"/>
</dbReference>
<dbReference type="Gene3D" id="1.10.530.10">
    <property type="match status" value="1"/>
</dbReference>
<dbReference type="InterPro" id="IPR001916">
    <property type="entry name" value="Glyco_hydro_22"/>
</dbReference>
<dbReference type="InterPro" id="IPR019799">
    <property type="entry name" value="Glyco_hydro_22_CS"/>
</dbReference>
<dbReference type="InterPro" id="IPR000974">
    <property type="entry name" value="Glyco_hydro_22_lys"/>
</dbReference>
<dbReference type="InterPro" id="IPR023346">
    <property type="entry name" value="Lysozyme-like_dom_sf"/>
</dbReference>
<dbReference type="PANTHER" id="PTHR11407">
    <property type="entry name" value="LYSOZYME C"/>
    <property type="match status" value="1"/>
</dbReference>
<dbReference type="PANTHER" id="PTHR11407:SF28">
    <property type="entry name" value="LYSOZYME C"/>
    <property type="match status" value="1"/>
</dbReference>
<dbReference type="Pfam" id="PF00062">
    <property type="entry name" value="Lys"/>
    <property type="match status" value="1"/>
</dbReference>
<dbReference type="PRINTS" id="PR00137">
    <property type="entry name" value="LYSOZYME"/>
</dbReference>
<dbReference type="PRINTS" id="PR00135">
    <property type="entry name" value="LYZLACT"/>
</dbReference>
<dbReference type="SMART" id="SM00263">
    <property type="entry name" value="LYZ1"/>
    <property type="match status" value="1"/>
</dbReference>
<dbReference type="SUPFAM" id="SSF53955">
    <property type="entry name" value="Lysozyme-like"/>
    <property type="match status" value="1"/>
</dbReference>
<dbReference type="PROSITE" id="PS00128">
    <property type="entry name" value="GLYCOSYL_HYDROL_F22_1"/>
    <property type="match status" value="1"/>
</dbReference>
<dbReference type="PROSITE" id="PS51348">
    <property type="entry name" value="GLYCOSYL_HYDROL_F22_2"/>
    <property type="match status" value="1"/>
</dbReference>
<organism>
    <name type="scientific">Numida meleagris</name>
    <name type="common">Helmeted guineafowl</name>
    <name type="synonym">Phasianus meleagris</name>
    <dbReference type="NCBI Taxonomy" id="8996"/>
    <lineage>
        <taxon>Eukaryota</taxon>
        <taxon>Metazoa</taxon>
        <taxon>Chordata</taxon>
        <taxon>Craniata</taxon>
        <taxon>Vertebrata</taxon>
        <taxon>Euteleostomi</taxon>
        <taxon>Archelosauria</taxon>
        <taxon>Archosauria</taxon>
        <taxon>Dinosauria</taxon>
        <taxon>Saurischia</taxon>
        <taxon>Theropoda</taxon>
        <taxon>Coelurosauria</taxon>
        <taxon>Aves</taxon>
        <taxon>Neognathae</taxon>
        <taxon>Galloanserae</taxon>
        <taxon>Galliformes</taxon>
        <taxon>Numididae</taxon>
        <taxon>Numida</taxon>
    </lineage>
</organism>
<feature type="chain" id="PRO_0000208868" description="Lysozyme C">
    <location>
        <begin position="1"/>
        <end position="129"/>
    </location>
</feature>
<feature type="domain" description="C-type lysozyme" evidence="1">
    <location>
        <begin position="1"/>
        <end position="129"/>
    </location>
</feature>
<feature type="active site">
    <location>
        <position position="35"/>
    </location>
</feature>
<feature type="active site">
    <location>
        <position position="52"/>
    </location>
</feature>
<feature type="disulfide bond">
    <location>
        <begin position="6"/>
        <end position="127"/>
    </location>
</feature>
<feature type="disulfide bond">
    <location>
        <begin position="30"/>
        <end position="115"/>
    </location>
</feature>
<feature type="disulfide bond">
    <location>
        <begin position="64"/>
        <end position="80"/>
    </location>
</feature>
<feature type="disulfide bond">
    <location>
        <begin position="76"/>
        <end position="94"/>
    </location>
</feature>
<feature type="helix" evidence="3">
    <location>
        <begin position="5"/>
        <end position="14"/>
    </location>
</feature>
<feature type="helix" evidence="3">
    <location>
        <begin position="25"/>
        <end position="36"/>
    </location>
</feature>
<feature type="strand" evidence="2">
    <location>
        <begin position="37"/>
        <end position="39"/>
    </location>
</feature>
<feature type="strand" evidence="3">
    <location>
        <begin position="43"/>
        <end position="45"/>
    </location>
</feature>
<feature type="strand" evidence="3">
    <location>
        <begin position="51"/>
        <end position="53"/>
    </location>
</feature>
<feature type="turn" evidence="3">
    <location>
        <begin position="54"/>
        <end position="57"/>
    </location>
</feature>
<feature type="turn" evidence="3">
    <location>
        <begin position="60"/>
        <end position="63"/>
    </location>
</feature>
<feature type="helix" evidence="3">
    <location>
        <begin position="80"/>
        <end position="84"/>
    </location>
</feature>
<feature type="helix" evidence="3">
    <location>
        <begin position="89"/>
        <end position="101"/>
    </location>
</feature>
<feature type="helix" evidence="3">
    <location>
        <begin position="104"/>
        <end position="107"/>
    </location>
</feature>
<feature type="helix" evidence="3">
    <location>
        <begin position="109"/>
        <end position="114"/>
    </location>
</feature>
<feature type="turn" evidence="3">
    <location>
        <begin position="115"/>
        <end position="117"/>
    </location>
</feature>
<feature type="helix" evidence="3">
    <location>
        <begin position="121"/>
        <end position="124"/>
    </location>
</feature>
<reference key="1">
    <citation type="journal article" date="1972" name="Biochim. Biophys. Acta">
        <title>Amino acid sequence of guinea-hen egg-white lysozyme.</title>
        <authorList>
            <person name="Jolles J."/>
            <person name="van Leemputten E."/>
            <person name="Mouton A."/>
            <person name="Jolles P."/>
        </authorList>
    </citation>
    <scope>PROTEIN SEQUENCE</scope>
    <source>
        <tissue>Egg white</tissue>
    </source>
</reference>
<reference key="2">
    <citation type="journal article" date="1991" name="J. Biochem.">
        <title>1H-NMR study on the structure of lysozyme from guinea hen egg white.</title>
        <authorList>
            <person name="Fukamizo T."/>
            <person name="Ikeda Y."/>
            <person name="Torikata T."/>
            <person name="Araki T."/>
            <person name="Kuramoto M."/>
            <person name="Goto S."/>
        </authorList>
    </citation>
    <scope>STRUCTURE BY NMR</scope>
</reference>
<reference key="3">
    <citation type="journal article" date="1994" name="Protein Sci.">
        <title>Crystal structures of pheasant and guinea fowl egg-white lysozymes.</title>
        <authorList>
            <person name="Lescar J."/>
            <person name="Souchon H."/>
            <person name="Alzari P.M."/>
        </authorList>
    </citation>
    <scope>X-RAY CRYSTALLOGRAPHY (1.9 ANGSTROMS)</scope>
</reference>
<name>LYSC_NUMME</name>
<accession>P00704</accession>
<gene>
    <name type="primary">LYZ</name>
</gene>
<keyword id="KW-0002">3D-structure</keyword>
<keyword id="KW-0929">Antimicrobial</keyword>
<keyword id="KW-0081">Bacteriolytic enzyme</keyword>
<keyword id="KW-0903">Direct protein sequencing</keyword>
<keyword id="KW-1015">Disulfide bond</keyword>
<keyword id="KW-0326">Glycosidase</keyword>
<keyword id="KW-0378">Hydrolase</keyword>
<keyword id="KW-0964">Secreted</keyword>
<proteinExistence type="evidence at protein level"/>
<sequence>KVFGRCELAAAMKRHGLDNYRGYSLGNWVCAAKFESNFNSQATNRNTDGSTDYGVLQINSRWWCNDGRTPGSRNLCNIPCSALQSSDITATANCAKKIVSDGNGMNAWVAWRKHCKGTDVRVWIKGCRL</sequence>
<comment type="function">
    <text>Lysozymes have primarily a bacteriolytic function; those in tissues and body fluids are associated with the monocyte-macrophage system and enhance the activity of immunoagents.</text>
</comment>
<comment type="catalytic activity">
    <reaction>
        <text>Hydrolysis of (1-&gt;4)-beta-linkages between N-acetylmuramic acid and N-acetyl-D-glucosamine residues in a peptidoglycan and between N-acetyl-D-glucosamine residues in chitodextrins.</text>
        <dbReference type="EC" id="3.2.1.17"/>
    </reaction>
</comment>
<comment type="subunit">
    <text>Monomer.</text>
</comment>
<comment type="subcellular location">
    <subcellularLocation>
        <location>Secreted</location>
    </subcellularLocation>
</comment>
<comment type="miscellaneous">
    <text>Lysozyme C is capable of both hydrolysis and transglycosylation; it also shows a slight esterase activity. It acts rapidly on both peptide-substituted and unsubstituted peptidoglycan, and slowly on chitin oligosaccharides.</text>
</comment>
<comment type="similarity">
    <text evidence="1">Belongs to the glycosyl hydrolase 22 family.</text>
</comment>
<evidence type="ECO:0000255" key="1">
    <source>
        <dbReference type="PROSITE-ProRule" id="PRU00680"/>
    </source>
</evidence>
<evidence type="ECO:0007829" key="2">
    <source>
        <dbReference type="PDB" id="1FBI"/>
    </source>
</evidence>
<evidence type="ECO:0007829" key="3">
    <source>
        <dbReference type="PDB" id="1HHL"/>
    </source>
</evidence>